<dbReference type="EC" id="2.7.4.6"/>
<dbReference type="EMBL" id="D88148">
    <property type="protein sequence ID" value="BAA83495.1"/>
    <property type="molecule type" value="mRNA"/>
</dbReference>
<dbReference type="EMBL" id="AL807373">
    <property type="protein sequence ID" value="CAD37041.1"/>
    <property type="molecule type" value="Genomic_DNA"/>
</dbReference>
<dbReference type="EMBL" id="CM002240">
    <property type="protein sequence ID" value="ESA42670.1"/>
    <property type="status" value="ALT_INIT"/>
    <property type="molecule type" value="Genomic_DNA"/>
</dbReference>
<dbReference type="PIR" id="T50459">
    <property type="entry name" value="T50459"/>
</dbReference>
<dbReference type="RefSeq" id="XP_011394634.1">
    <property type="nucleotide sequence ID" value="XM_011396332.1"/>
</dbReference>
<dbReference type="SMR" id="Q9UUY8"/>
<dbReference type="FunCoup" id="Q9UUY8">
    <property type="interactions" value="850"/>
</dbReference>
<dbReference type="IntAct" id="Q9UUY8">
    <property type="interactions" value="2"/>
</dbReference>
<dbReference type="MINT" id="Q9UUY8"/>
<dbReference type="STRING" id="367110.Q9UUY8"/>
<dbReference type="PaxDb" id="5141-EFNCRP00000003897"/>
<dbReference type="EnsemblFungi" id="ESA42670">
    <property type="protein sequence ID" value="ESA42670"/>
    <property type="gene ID" value="NCU04202"/>
</dbReference>
<dbReference type="GeneID" id="3877285"/>
<dbReference type="KEGG" id="ncr:NCU04202"/>
<dbReference type="HOGENOM" id="CLU_060216_6_3_1"/>
<dbReference type="InParanoid" id="Q9UUY8"/>
<dbReference type="OMA" id="NIWFKAD"/>
<dbReference type="OrthoDB" id="2162449at2759"/>
<dbReference type="BRENDA" id="2.7.4.6">
    <property type="organism ID" value="3627"/>
</dbReference>
<dbReference type="Proteomes" id="UP000001805">
    <property type="component" value="Chromosome 2, Linkage Group V"/>
</dbReference>
<dbReference type="GO" id="GO:0005524">
    <property type="term" value="F:ATP binding"/>
    <property type="evidence" value="ECO:0007669"/>
    <property type="project" value="UniProtKB-KW"/>
</dbReference>
<dbReference type="GO" id="GO:0046872">
    <property type="term" value="F:metal ion binding"/>
    <property type="evidence" value="ECO:0007669"/>
    <property type="project" value="UniProtKB-KW"/>
</dbReference>
<dbReference type="GO" id="GO:0004550">
    <property type="term" value="F:nucleoside diphosphate kinase activity"/>
    <property type="evidence" value="ECO:0007669"/>
    <property type="project" value="UniProtKB-EC"/>
</dbReference>
<dbReference type="GO" id="GO:0006241">
    <property type="term" value="P:CTP biosynthetic process"/>
    <property type="evidence" value="ECO:0007669"/>
    <property type="project" value="InterPro"/>
</dbReference>
<dbReference type="GO" id="GO:0006183">
    <property type="term" value="P:GTP biosynthetic process"/>
    <property type="evidence" value="ECO:0007669"/>
    <property type="project" value="InterPro"/>
</dbReference>
<dbReference type="GO" id="GO:0006228">
    <property type="term" value="P:UTP biosynthetic process"/>
    <property type="evidence" value="ECO:0007669"/>
    <property type="project" value="InterPro"/>
</dbReference>
<dbReference type="CDD" id="cd04413">
    <property type="entry name" value="NDPk_I"/>
    <property type="match status" value="1"/>
</dbReference>
<dbReference type="FunFam" id="3.30.70.141:FF:000002">
    <property type="entry name" value="Nucleoside diphosphate kinase"/>
    <property type="match status" value="1"/>
</dbReference>
<dbReference type="Gene3D" id="3.30.70.141">
    <property type="entry name" value="Nucleoside diphosphate kinase-like domain"/>
    <property type="match status" value="1"/>
</dbReference>
<dbReference type="HAMAP" id="MF_00451">
    <property type="entry name" value="NDP_kinase"/>
    <property type="match status" value="1"/>
</dbReference>
<dbReference type="InterPro" id="IPR034907">
    <property type="entry name" value="NDK-like_dom"/>
</dbReference>
<dbReference type="InterPro" id="IPR036850">
    <property type="entry name" value="NDK-like_dom_sf"/>
</dbReference>
<dbReference type="InterPro" id="IPR001564">
    <property type="entry name" value="Nucleoside_diP_kinase"/>
</dbReference>
<dbReference type="InterPro" id="IPR023005">
    <property type="entry name" value="Nucleoside_diP_kinase_AS"/>
</dbReference>
<dbReference type="NCBIfam" id="NF001908">
    <property type="entry name" value="PRK00668.1"/>
    <property type="match status" value="1"/>
</dbReference>
<dbReference type="PANTHER" id="PTHR11349">
    <property type="entry name" value="NUCLEOSIDE DIPHOSPHATE KINASE"/>
    <property type="match status" value="1"/>
</dbReference>
<dbReference type="Pfam" id="PF00334">
    <property type="entry name" value="NDK"/>
    <property type="match status" value="1"/>
</dbReference>
<dbReference type="PRINTS" id="PR01243">
    <property type="entry name" value="NUCDPKINASE"/>
</dbReference>
<dbReference type="SMART" id="SM00562">
    <property type="entry name" value="NDK"/>
    <property type="match status" value="1"/>
</dbReference>
<dbReference type="SUPFAM" id="SSF54919">
    <property type="entry name" value="Nucleoside diphosphate kinase, NDK"/>
    <property type="match status" value="1"/>
</dbReference>
<dbReference type="PROSITE" id="PS00469">
    <property type="entry name" value="NDPK"/>
    <property type="match status" value="1"/>
</dbReference>
<dbReference type="PROSITE" id="PS51374">
    <property type="entry name" value="NDPK_LIKE"/>
    <property type="match status" value="1"/>
</dbReference>
<sequence length="152" mass="16900">MSNQEQTFIAVKPDGVQRGLVGNIISRFENRGFKLVAMKLTQPGQAHLEKHYEDLNTKPFFAGLIKYMNSGPICAMVWEGKDAVKTGRTILGATNPLASAPGTIRGDFALDMGRNVCHGSDSVENAKKEIALWFKPEELNQWNHHSAAWIFE</sequence>
<keyword id="KW-0067">ATP-binding</keyword>
<keyword id="KW-0418">Kinase</keyword>
<keyword id="KW-0460">Magnesium</keyword>
<keyword id="KW-0479">Metal-binding</keyword>
<keyword id="KW-0546">Nucleotide metabolism</keyword>
<keyword id="KW-0547">Nucleotide-binding</keyword>
<keyword id="KW-0597">Phosphoprotein</keyword>
<keyword id="KW-1185">Reference proteome</keyword>
<keyword id="KW-0808">Transferase</keyword>
<name>NDK_NEUCR</name>
<proteinExistence type="evidence at transcript level"/>
<reference key="1">
    <citation type="journal article" date="1999" name="Eur. J. Biochem.">
        <title>Isolation and characterization of Neurospora crassa nucleoside diphosphate kinase NDK-1.</title>
        <authorList>
            <person name="Ogura Y."/>
            <person name="Yoshida Y."/>
            <person name="Ichimura K."/>
            <person name="Aoyagi C."/>
            <person name="Yabe N."/>
            <person name="Hasunuma K."/>
        </authorList>
    </citation>
    <scope>NUCLEOTIDE SEQUENCE [MRNA]</scope>
    <source>
        <strain>ATCC 24698 / 74-OR23-1A / CBS 708.71 / DSM 1257 / FGSC 987</strain>
    </source>
</reference>
<reference key="2">
    <citation type="journal article" date="2003" name="Nucleic Acids Res.">
        <title>What's in the genome of a filamentous fungus? Analysis of the Neurospora genome sequence.</title>
        <authorList>
            <person name="Mannhaupt G."/>
            <person name="Montrone C."/>
            <person name="Haase D."/>
            <person name="Mewes H.-W."/>
            <person name="Aign V."/>
            <person name="Hoheisel J.D."/>
            <person name="Fartmann B."/>
            <person name="Nyakatura G."/>
            <person name="Kempken F."/>
            <person name="Maier J."/>
            <person name="Schulte U."/>
        </authorList>
    </citation>
    <scope>NUCLEOTIDE SEQUENCE [LARGE SCALE GENOMIC DNA]</scope>
    <source>
        <strain>ATCC 24698 / 74-OR23-1A / CBS 708.71 / DSM 1257 / FGSC 987</strain>
    </source>
</reference>
<reference key="3">
    <citation type="journal article" date="2003" name="Nature">
        <title>The genome sequence of the filamentous fungus Neurospora crassa.</title>
        <authorList>
            <person name="Galagan J.E."/>
            <person name="Calvo S.E."/>
            <person name="Borkovich K.A."/>
            <person name="Selker E.U."/>
            <person name="Read N.D."/>
            <person name="Jaffe D.B."/>
            <person name="FitzHugh W."/>
            <person name="Ma L.-J."/>
            <person name="Smirnov S."/>
            <person name="Purcell S."/>
            <person name="Rehman B."/>
            <person name="Elkins T."/>
            <person name="Engels R."/>
            <person name="Wang S."/>
            <person name="Nielsen C.B."/>
            <person name="Butler J."/>
            <person name="Endrizzi M."/>
            <person name="Qui D."/>
            <person name="Ianakiev P."/>
            <person name="Bell-Pedersen D."/>
            <person name="Nelson M.A."/>
            <person name="Werner-Washburne M."/>
            <person name="Selitrennikoff C.P."/>
            <person name="Kinsey J.A."/>
            <person name="Braun E.L."/>
            <person name="Zelter A."/>
            <person name="Schulte U."/>
            <person name="Kothe G.O."/>
            <person name="Jedd G."/>
            <person name="Mewes H.-W."/>
            <person name="Staben C."/>
            <person name="Marcotte E."/>
            <person name="Greenberg D."/>
            <person name="Roy A."/>
            <person name="Foley K."/>
            <person name="Naylor J."/>
            <person name="Stange-Thomann N."/>
            <person name="Barrett R."/>
            <person name="Gnerre S."/>
            <person name="Kamal M."/>
            <person name="Kamvysselis M."/>
            <person name="Mauceli E.W."/>
            <person name="Bielke C."/>
            <person name="Rudd S."/>
            <person name="Frishman D."/>
            <person name="Krystofova S."/>
            <person name="Rasmussen C."/>
            <person name="Metzenberg R.L."/>
            <person name="Perkins D.D."/>
            <person name="Kroken S."/>
            <person name="Cogoni C."/>
            <person name="Macino G."/>
            <person name="Catcheside D.E.A."/>
            <person name="Li W."/>
            <person name="Pratt R.J."/>
            <person name="Osmani S.A."/>
            <person name="DeSouza C.P.C."/>
            <person name="Glass N.L."/>
            <person name="Orbach M.J."/>
            <person name="Berglund J.A."/>
            <person name="Voelker R."/>
            <person name="Yarden O."/>
            <person name="Plamann M."/>
            <person name="Seiler S."/>
            <person name="Dunlap J.C."/>
            <person name="Radford A."/>
            <person name="Aramayo R."/>
            <person name="Natvig D.O."/>
            <person name="Alex L.A."/>
            <person name="Mannhaupt G."/>
            <person name="Ebbole D.J."/>
            <person name="Freitag M."/>
            <person name="Paulsen I."/>
            <person name="Sachs M.S."/>
            <person name="Lander E.S."/>
            <person name="Nusbaum C."/>
            <person name="Birren B.W."/>
        </authorList>
    </citation>
    <scope>NUCLEOTIDE SEQUENCE [LARGE SCALE GENOMIC DNA]</scope>
    <source>
        <strain>ATCC 24698 / 74-OR23-1A / CBS 708.71 / DSM 1257 / FGSC 987</strain>
    </source>
</reference>
<organism>
    <name type="scientific">Neurospora crassa (strain ATCC 24698 / 74-OR23-1A / CBS 708.71 / DSM 1257 / FGSC 987)</name>
    <dbReference type="NCBI Taxonomy" id="367110"/>
    <lineage>
        <taxon>Eukaryota</taxon>
        <taxon>Fungi</taxon>
        <taxon>Dikarya</taxon>
        <taxon>Ascomycota</taxon>
        <taxon>Pezizomycotina</taxon>
        <taxon>Sordariomycetes</taxon>
        <taxon>Sordariomycetidae</taxon>
        <taxon>Sordariales</taxon>
        <taxon>Sordariaceae</taxon>
        <taxon>Neurospora</taxon>
    </lineage>
</organism>
<accession>Q9UUY8</accession>
<accession>Q7RVC6</accession>
<accession>Q8NJ15</accession>
<accession>V5IMS4</accession>
<feature type="chain" id="PRO_0000137151" description="Nucleoside diphosphate kinase">
    <location>
        <begin position="1"/>
        <end position="152"/>
    </location>
</feature>
<feature type="active site" description="Pros-phosphohistidine intermediate" evidence="1">
    <location>
        <position position="118"/>
    </location>
</feature>
<feature type="binding site" evidence="1">
    <location>
        <position position="12"/>
    </location>
    <ligand>
        <name>ATP</name>
        <dbReference type="ChEBI" id="CHEBI:30616"/>
    </ligand>
</feature>
<feature type="binding site" evidence="1">
    <location>
        <position position="60"/>
    </location>
    <ligand>
        <name>ATP</name>
        <dbReference type="ChEBI" id="CHEBI:30616"/>
    </ligand>
</feature>
<feature type="binding site" evidence="1">
    <location>
        <position position="88"/>
    </location>
    <ligand>
        <name>ATP</name>
        <dbReference type="ChEBI" id="CHEBI:30616"/>
    </ligand>
</feature>
<feature type="binding site" evidence="1">
    <location>
        <position position="94"/>
    </location>
    <ligand>
        <name>ATP</name>
        <dbReference type="ChEBI" id="CHEBI:30616"/>
    </ligand>
</feature>
<feature type="binding site" evidence="1">
    <location>
        <position position="105"/>
    </location>
    <ligand>
        <name>ATP</name>
        <dbReference type="ChEBI" id="CHEBI:30616"/>
    </ligand>
</feature>
<feature type="binding site" evidence="1">
    <location>
        <position position="115"/>
    </location>
    <ligand>
        <name>ATP</name>
        <dbReference type="ChEBI" id="CHEBI:30616"/>
    </ligand>
</feature>
<feature type="sequence conflict" description="In Ref. 1; BAA83495." evidence="2" ref="1">
    <original>A</original>
    <variation>V</variation>
    <location>
        <position position="46"/>
    </location>
</feature>
<feature type="sequence conflict" description="In Ref. 1; BAA83495." evidence="2" ref="1">
    <original>E</original>
    <variation>ELE</variation>
    <location>
        <position position="49"/>
    </location>
</feature>
<gene>
    <name type="primary">ndk-1</name>
    <name type="ORF">21D9.020</name>
    <name type="ORF">NCU04202</name>
</gene>
<protein>
    <recommendedName>
        <fullName>Nucleoside diphosphate kinase</fullName>
        <shortName>NDK</shortName>
        <shortName>NDP kinase</shortName>
        <ecNumber>2.7.4.6</ecNumber>
    </recommendedName>
</protein>
<evidence type="ECO:0000250" key="1"/>
<evidence type="ECO:0000305" key="2"/>
<comment type="function">
    <text>Major role in the synthesis of nucleoside triphosphates other than ATP. The ATP gamma phosphate is transferred to the NDP beta phosphate via a ping-pong mechanism, using a phosphorylated active-site intermediate.</text>
</comment>
<comment type="catalytic activity">
    <reaction>
        <text>a 2'-deoxyribonucleoside 5'-diphosphate + ATP = a 2'-deoxyribonucleoside 5'-triphosphate + ADP</text>
        <dbReference type="Rhea" id="RHEA:44640"/>
        <dbReference type="ChEBI" id="CHEBI:30616"/>
        <dbReference type="ChEBI" id="CHEBI:61560"/>
        <dbReference type="ChEBI" id="CHEBI:73316"/>
        <dbReference type="ChEBI" id="CHEBI:456216"/>
        <dbReference type="EC" id="2.7.4.6"/>
    </reaction>
</comment>
<comment type="catalytic activity">
    <reaction>
        <text>a ribonucleoside 5'-diphosphate + ATP = a ribonucleoside 5'-triphosphate + ADP</text>
        <dbReference type="Rhea" id="RHEA:18113"/>
        <dbReference type="ChEBI" id="CHEBI:30616"/>
        <dbReference type="ChEBI" id="CHEBI:57930"/>
        <dbReference type="ChEBI" id="CHEBI:61557"/>
        <dbReference type="ChEBI" id="CHEBI:456216"/>
        <dbReference type="EC" id="2.7.4.6"/>
    </reaction>
</comment>
<comment type="cofactor">
    <cofactor evidence="1">
        <name>Mg(2+)</name>
        <dbReference type="ChEBI" id="CHEBI:18420"/>
    </cofactor>
</comment>
<comment type="subunit">
    <text evidence="1">Homotrimer.</text>
</comment>
<comment type="similarity">
    <text evidence="2">Belongs to the NDK family.</text>
</comment>
<comment type="sequence caution" evidence="2">
    <conflict type="erroneous initiation">
        <sequence resource="EMBL-CDS" id="ESA42670"/>
    </conflict>
    <text>Extended N-terminus.</text>
</comment>